<gene>
    <name type="ordered locus">At5g14170</name>
    <name type="ORF">MUA22.17</name>
</gene>
<comment type="function">
    <text evidence="1">Involved in transcriptional activation and repression of select genes by chromatin remodeling (alteration of DNA-nucleosome topology).</text>
</comment>
<comment type="subunit">
    <text evidence="1">Part of a SWI-SNF complex.</text>
</comment>
<comment type="interaction">
    <interactant intactId="EBI-3387100">
        <id>Q9FMT4</id>
    </interactant>
    <interactant intactId="EBI-963606">
        <id>Q9LQT8</id>
        <label>GAI</label>
    </interactant>
    <organismsDiffer>false</organismsDiffer>
    <experiments>3</experiments>
</comment>
<comment type="interaction">
    <interactant intactId="EBI-3387100">
        <id>Q9FMT4</id>
    </interactant>
    <interactant intactId="EBI-963686">
        <id>Q9LYC1</id>
        <label>GID1B</label>
    </interactant>
    <organismsDiffer>false</organismsDiffer>
    <experiments>3</experiments>
</comment>
<comment type="interaction">
    <interactant intactId="EBI-3387100">
        <id>Q9FMT4</id>
    </interactant>
    <interactant intactId="EBI-25506855">
        <id>O23160</id>
        <label>MYB73</label>
    </interactant>
    <organismsDiffer>false</organismsDiffer>
    <experiments>3</experiments>
</comment>
<comment type="interaction">
    <interactant intactId="EBI-3387100">
        <id>Q9FMT4</id>
    </interactant>
    <interactant intactId="EBI-963624">
        <id>Q9SLH3</id>
        <label>RGA</label>
    </interactant>
    <organismsDiffer>false</organismsDiffer>
    <experiments>3</experiments>
</comment>
<comment type="interaction">
    <interactant intactId="EBI-3387100">
        <id>Q9FMT4</id>
    </interactant>
    <interactant intactId="EBI-963665">
        <id>Q8GXW1</id>
        <label>RGL2</label>
    </interactant>
    <organismsDiffer>false</organismsDiffer>
    <experiments>3</experiments>
</comment>
<comment type="interaction">
    <interactant intactId="EBI-3387100">
        <id>Q9FMT4</id>
    </interactant>
    <interactant intactId="EBI-15681313">
        <id>Q9LF53</id>
        <label>RGL3</label>
    </interactant>
    <organismsDiffer>false</organismsDiffer>
    <experiments>3</experiments>
</comment>
<comment type="interaction">
    <interactant intactId="EBI-3387100">
        <id>Q9FMT4</id>
    </interactant>
    <interactant intactId="EBI-15192325">
        <id>Q8LPR5</id>
        <label>TCP4</label>
    </interactant>
    <organismsDiffer>false</organismsDiffer>
    <experiments>3</experiments>
</comment>
<comment type="subcellular location">
    <subcellularLocation>
        <location evidence="4">Nucleus</location>
    </subcellularLocation>
</comment>
<comment type="similarity">
    <text evidence="4">Belongs to the SMARCD family.</text>
</comment>
<proteinExistence type="evidence at protein level"/>
<dbReference type="EMBL" id="AB007650">
    <property type="protein sequence ID" value="BAB08296.1"/>
    <property type="molecule type" value="Genomic_DNA"/>
</dbReference>
<dbReference type="EMBL" id="CP002688">
    <property type="protein sequence ID" value="AED91995.1"/>
    <property type="molecule type" value="Genomic_DNA"/>
</dbReference>
<dbReference type="EMBL" id="BT008892">
    <property type="protein sequence ID" value="AAP68331.1"/>
    <property type="molecule type" value="mRNA"/>
</dbReference>
<dbReference type="EMBL" id="AY065106">
    <property type="protein sequence ID" value="AAL38282.1"/>
    <property type="molecule type" value="mRNA"/>
</dbReference>
<dbReference type="RefSeq" id="NP_196921.1">
    <property type="nucleotide sequence ID" value="NM_121421.4"/>
</dbReference>
<dbReference type="PDB" id="1V31">
    <property type="method" value="NMR"/>
    <property type="chains" value="A=315-394"/>
</dbReference>
<dbReference type="PDBsum" id="1V31"/>
<dbReference type="BMRB" id="Q9FMT4"/>
<dbReference type="SMR" id="Q9FMT4"/>
<dbReference type="BioGRID" id="16545">
    <property type="interactions" value="116"/>
</dbReference>
<dbReference type="ComplexPortal" id="CPX-7723">
    <property type="entry name" value="BRAHMA SWI/SNF ATP-dependent chromatin remodeling complex"/>
</dbReference>
<dbReference type="ComplexPortal" id="CPX-7726">
    <property type="entry name" value="SYD-associated SWI/SNF ATP-dependent chromatin remodeling complex"/>
</dbReference>
<dbReference type="ComplexPortal" id="CPX-7727">
    <property type="entry name" value="MINU1/2-associated SWI/SNF ATP-dependent chromatin remodeling complex"/>
</dbReference>
<dbReference type="FunCoup" id="Q9FMT4">
    <property type="interactions" value="3725"/>
</dbReference>
<dbReference type="IntAct" id="Q9FMT4">
    <property type="interactions" value="24"/>
</dbReference>
<dbReference type="STRING" id="3702.Q9FMT4"/>
<dbReference type="iPTMnet" id="Q9FMT4"/>
<dbReference type="PaxDb" id="3702-AT5G14170.1"/>
<dbReference type="ProteomicsDB" id="232641"/>
<dbReference type="EnsemblPlants" id="AT5G14170.1">
    <property type="protein sequence ID" value="AT5G14170.1"/>
    <property type="gene ID" value="AT5G14170"/>
</dbReference>
<dbReference type="GeneID" id="831267"/>
<dbReference type="Gramene" id="AT5G14170.1">
    <property type="protein sequence ID" value="AT5G14170.1"/>
    <property type="gene ID" value="AT5G14170"/>
</dbReference>
<dbReference type="KEGG" id="ath:AT5G14170"/>
<dbReference type="Araport" id="AT5G14170"/>
<dbReference type="TAIR" id="AT5G14170">
    <property type="gene designation" value="CHC1"/>
</dbReference>
<dbReference type="eggNOG" id="KOG2570">
    <property type="taxonomic scope" value="Eukaryota"/>
</dbReference>
<dbReference type="HOGENOM" id="CLU_023529_1_0_1"/>
<dbReference type="InParanoid" id="Q9FMT4"/>
<dbReference type="OMA" id="NFRCNEP"/>
<dbReference type="OrthoDB" id="10263741at2759"/>
<dbReference type="PhylomeDB" id="Q9FMT4"/>
<dbReference type="CD-CODE" id="4299E36E">
    <property type="entry name" value="Nucleolus"/>
</dbReference>
<dbReference type="EvolutionaryTrace" id="Q9FMT4"/>
<dbReference type="PRO" id="PR:Q9FMT4"/>
<dbReference type="Proteomes" id="UP000006548">
    <property type="component" value="Chromosome 5"/>
</dbReference>
<dbReference type="ExpressionAtlas" id="Q9FMT4">
    <property type="expression patterns" value="baseline and differential"/>
</dbReference>
<dbReference type="GO" id="GO:0005634">
    <property type="term" value="C:nucleus"/>
    <property type="evidence" value="ECO:0000314"/>
    <property type="project" value="TAIR"/>
</dbReference>
<dbReference type="GO" id="GO:0006325">
    <property type="term" value="P:chromatin organization"/>
    <property type="evidence" value="ECO:0007669"/>
    <property type="project" value="UniProtKB-KW"/>
</dbReference>
<dbReference type="GO" id="GO:0006281">
    <property type="term" value="P:DNA repair"/>
    <property type="evidence" value="ECO:0000315"/>
    <property type="project" value="TAIR"/>
</dbReference>
<dbReference type="GO" id="GO:0009909">
    <property type="term" value="P:regulation of flower development"/>
    <property type="evidence" value="ECO:0000315"/>
    <property type="project" value="TAIR"/>
</dbReference>
<dbReference type="GO" id="GO:0010468">
    <property type="term" value="P:regulation of gene expression"/>
    <property type="evidence" value="ECO:0000314"/>
    <property type="project" value="TAIR"/>
</dbReference>
<dbReference type="GO" id="GO:2000024">
    <property type="term" value="P:regulation of leaf development"/>
    <property type="evidence" value="ECO:0000315"/>
    <property type="project" value="TAIR"/>
</dbReference>
<dbReference type="GO" id="GO:0010224">
    <property type="term" value="P:response to UV-B"/>
    <property type="evidence" value="ECO:0000270"/>
    <property type="project" value="TAIR"/>
</dbReference>
<dbReference type="GO" id="GO:0048364">
    <property type="term" value="P:root development"/>
    <property type="evidence" value="ECO:0000315"/>
    <property type="project" value="TAIR"/>
</dbReference>
<dbReference type="CDD" id="cd10568">
    <property type="entry name" value="SWIB_like"/>
    <property type="match status" value="1"/>
</dbReference>
<dbReference type="FunFam" id="1.10.245.10:FF:000007">
    <property type="entry name" value="SWIB complex BAF60b domain-containing protein"/>
    <property type="match status" value="1"/>
</dbReference>
<dbReference type="Gene3D" id="1.10.245.10">
    <property type="entry name" value="SWIB/MDM2 domain"/>
    <property type="match status" value="1"/>
</dbReference>
<dbReference type="InterPro" id="IPR019835">
    <property type="entry name" value="SWIB_domain"/>
</dbReference>
<dbReference type="InterPro" id="IPR036885">
    <property type="entry name" value="SWIB_MDM2_dom_sf"/>
</dbReference>
<dbReference type="InterPro" id="IPR003121">
    <property type="entry name" value="SWIB_MDM2_domain"/>
</dbReference>
<dbReference type="PANTHER" id="PTHR13844">
    <property type="entry name" value="SWI/SNF-RELATED MATRIX-ASSOCIATED ACTIN-DEPENDENT REGULATOR OF CHROMATIN SUBFAMILY D"/>
    <property type="match status" value="1"/>
</dbReference>
<dbReference type="Pfam" id="PF02201">
    <property type="entry name" value="SWIB"/>
    <property type="match status" value="1"/>
</dbReference>
<dbReference type="SMART" id="SM00151">
    <property type="entry name" value="SWIB"/>
    <property type="match status" value="1"/>
</dbReference>
<dbReference type="SUPFAM" id="SSF47592">
    <property type="entry name" value="SWIB/MDM2 domain"/>
    <property type="match status" value="1"/>
</dbReference>
<dbReference type="PROSITE" id="PS51925">
    <property type="entry name" value="SWIB_MDM2"/>
    <property type="match status" value="1"/>
</dbReference>
<protein>
    <recommendedName>
        <fullName>SWI/SNF complex component SNF12 homolog</fullName>
    </recommendedName>
</protein>
<name>SNF12_ARATH</name>
<feature type="chain" id="PRO_0000220617" description="SWI/SNF complex component SNF12 homolog">
    <location>
        <begin position="1"/>
        <end position="534"/>
    </location>
</feature>
<feature type="domain" description="SWIB/MDM2" evidence="2">
    <location>
        <begin position="314"/>
        <end position="391"/>
    </location>
</feature>
<feature type="region of interest" description="Disordered" evidence="3">
    <location>
        <begin position="1"/>
        <end position="33"/>
    </location>
</feature>
<feature type="region of interest" description="Disordered" evidence="3">
    <location>
        <begin position="78"/>
        <end position="132"/>
    </location>
</feature>
<feature type="compositionally biased region" description="Polar residues" evidence="3">
    <location>
        <begin position="1"/>
        <end position="12"/>
    </location>
</feature>
<feature type="compositionally biased region" description="Low complexity" evidence="3">
    <location>
        <begin position="94"/>
        <end position="105"/>
    </location>
</feature>
<feature type="helix" evidence="5">
    <location>
        <begin position="323"/>
        <end position="328"/>
    </location>
</feature>
<feature type="strand" evidence="5">
    <location>
        <begin position="332"/>
        <end position="334"/>
    </location>
</feature>
<feature type="helix" evidence="5">
    <location>
        <begin position="337"/>
        <end position="349"/>
    </location>
</feature>
<feature type="strand" evidence="5">
    <location>
        <begin position="358"/>
        <end position="362"/>
    </location>
</feature>
<feature type="helix" evidence="5">
    <location>
        <begin position="366"/>
        <end position="370"/>
    </location>
</feature>
<feature type="strand" evidence="5">
    <location>
        <begin position="373"/>
        <end position="377"/>
    </location>
</feature>
<feature type="turn" evidence="5">
    <location>
        <begin position="378"/>
        <end position="381"/>
    </location>
</feature>
<feature type="helix" evidence="5">
    <location>
        <begin position="382"/>
        <end position="388"/>
    </location>
</feature>
<keyword id="KW-0002">3D-structure</keyword>
<keyword id="KW-0156">Chromatin regulator</keyword>
<keyword id="KW-0539">Nucleus</keyword>
<keyword id="KW-1185">Reference proteome</keyword>
<keyword id="KW-0804">Transcription</keyword>
<keyword id="KW-0805">Transcription regulation</keyword>
<evidence type="ECO:0000250" key="1"/>
<evidence type="ECO:0000255" key="2">
    <source>
        <dbReference type="PROSITE-ProRule" id="PRU01273"/>
    </source>
</evidence>
<evidence type="ECO:0000256" key="3">
    <source>
        <dbReference type="SAM" id="MobiDB-lite"/>
    </source>
</evidence>
<evidence type="ECO:0000305" key="4"/>
<evidence type="ECO:0007829" key="5">
    <source>
        <dbReference type="PDB" id="1V31"/>
    </source>
</evidence>
<accession>Q9FMT4</accession>
<organism>
    <name type="scientific">Arabidopsis thaliana</name>
    <name type="common">Mouse-ear cress</name>
    <dbReference type="NCBI Taxonomy" id="3702"/>
    <lineage>
        <taxon>Eukaryota</taxon>
        <taxon>Viridiplantae</taxon>
        <taxon>Streptophyta</taxon>
        <taxon>Embryophyta</taxon>
        <taxon>Tracheophyta</taxon>
        <taxon>Spermatophyta</taxon>
        <taxon>Magnoliopsida</taxon>
        <taxon>eudicotyledons</taxon>
        <taxon>Gunneridae</taxon>
        <taxon>Pentapetalae</taxon>
        <taxon>rosids</taxon>
        <taxon>malvids</taxon>
        <taxon>Brassicales</taxon>
        <taxon>Brassicaceae</taxon>
        <taxon>Camelineae</taxon>
        <taxon>Arabidopsis</taxon>
    </lineage>
</organism>
<sequence>MSGNNNNPQKPQGSAPLPFGNPGMASASVPGNQGFAQSHMAANFQAQFQFSQAQALAHAQAQSKVQAQLQAQLQAQGMTMNQAQGSPGIGGLGPSSPSLTTPGSLNMKRFQQKPPMRPPGAPASNNTISPMRTMELTPAARKKKQKLPEKSLQERVAAILPESALYTQLLEFESRVDAALTRKKVDIQEALKNPPCIQKTLRIYVFNSFANQNNTIPGNPNADPPTWTLKIIGRILEDGVDPDQPGFVQKANPLHPKFSSFFKRVTVSLDQRLYPENPLIIWENARSPAPQEGFEIKRKGNQEFAASIRLEMNYVPEKFKLSTALMDVLGIEVETRPRIIAAIWHYVKARKLQNPNDPSFFNCDAALQKVFGEEKLKFTMVSQKISHHLSPPPPIHLEHKIKLSGNNPAVSACYDVLVDVPFPIQRDLNNLLANAEKNKEIEACDEAICAAIRKIHEHRRRRAFFLGFSQSPVEFINALIESQSKDLKVVAGEASRNAERERRSDFFNQPWVEDAVIRYLNRRPAAGNDGPGSW</sequence>
<reference key="1">
    <citation type="journal article" date="1997" name="DNA Res.">
        <title>Structural analysis of Arabidopsis thaliana chromosome 5. III. Sequence features of the regions of 1,191,918 bp covered by seventeen physically assigned P1 clones.</title>
        <authorList>
            <person name="Nakamura Y."/>
            <person name="Sato S."/>
            <person name="Kaneko T."/>
            <person name="Kotani H."/>
            <person name="Asamizu E."/>
            <person name="Miyajima N."/>
            <person name="Tabata S."/>
        </authorList>
    </citation>
    <scope>NUCLEOTIDE SEQUENCE [LARGE SCALE GENOMIC DNA]</scope>
    <source>
        <strain>cv. Columbia</strain>
    </source>
</reference>
<reference key="2">
    <citation type="journal article" date="2017" name="Plant J.">
        <title>Araport11: a complete reannotation of the Arabidopsis thaliana reference genome.</title>
        <authorList>
            <person name="Cheng C.Y."/>
            <person name="Krishnakumar V."/>
            <person name="Chan A.P."/>
            <person name="Thibaud-Nissen F."/>
            <person name="Schobel S."/>
            <person name="Town C.D."/>
        </authorList>
    </citation>
    <scope>GENOME REANNOTATION</scope>
    <source>
        <strain>cv. Columbia</strain>
    </source>
</reference>
<reference key="3">
    <citation type="journal article" date="2003" name="Science">
        <title>Empirical analysis of transcriptional activity in the Arabidopsis genome.</title>
        <authorList>
            <person name="Yamada K."/>
            <person name="Lim J."/>
            <person name="Dale J.M."/>
            <person name="Chen H."/>
            <person name="Shinn P."/>
            <person name="Palm C.J."/>
            <person name="Southwick A.M."/>
            <person name="Wu H.C."/>
            <person name="Kim C.J."/>
            <person name="Nguyen M."/>
            <person name="Pham P.K."/>
            <person name="Cheuk R.F."/>
            <person name="Karlin-Newmann G."/>
            <person name="Liu S.X."/>
            <person name="Lam B."/>
            <person name="Sakano H."/>
            <person name="Wu T."/>
            <person name="Yu G."/>
            <person name="Miranda M."/>
            <person name="Quach H.L."/>
            <person name="Tripp M."/>
            <person name="Chang C.H."/>
            <person name="Lee J.M."/>
            <person name="Toriumi M.J."/>
            <person name="Chan M.M."/>
            <person name="Tang C.C."/>
            <person name="Onodera C.S."/>
            <person name="Deng J.M."/>
            <person name="Akiyama K."/>
            <person name="Ansari Y."/>
            <person name="Arakawa T."/>
            <person name="Banh J."/>
            <person name="Banno F."/>
            <person name="Bowser L."/>
            <person name="Brooks S.Y."/>
            <person name="Carninci P."/>
            <person name="Chao Q."/>
            <person name="Choy N."/>
            <person name="Enju A."/>
            <person name="Goldsmith A.D."/>
            <person name="Gurjal M."/>
            <person name="Hansen N.F."/>
            <person name="Hayashizaki Y."/>
            <person name="Johnson-Hopson C."/>
            <person name="Hsuan V.W."/>
            <person name="Iida K."/>
            <person name="Karnes M."/>
            <person name="Khan S."/>
            <person name="Koesema E."/>
            <person name="Ishida J."/>
            <person name="Jiang P.X."/>
            <person name="Jones T."/>
            <person name="Kawai J."/>
            <person name="Kamiya A."/>
            <person name="Meyers C."/>
            <person name="Nakajima M."/>
            <person name="Narusaka M."/>
            <person name="Seki M."/>
            <person name="Sakurai T."/>
            <person name="Satou M."/>
            <person name="Tamse R."/>
            <person name="Vaysberg M."/>
            <person name="Wallender E.K."/>
            <person name="Wong C."/>
            <person name="Yamamura Y."/>
            <person name="Yuan S."/>
            <person name="Shinozaki K."/>
            <person name="Davis R.W."/>
            <person name="Theologis A."/>
            <person name="Ecker J.R."/>
        </authorList>
    </citation>
    <scope>NUCLEOTIDE SEQUENCE [LARGE SCALE MRNA]</scope>
    <source>
        <strain>cv. Columbia</strain>
    </source>
</reference>
<reference key="4">
    <citation type="submission" date="2004-04" db="PDB data bank">
        <title>Solution structure of the SWIB/MDM2 domain of the hypothetical protein At5g14170 from Arabidopsis thaliana.</title>
        <authorList>
            <consortium name="RIKEN structural genomics initiative (RSGI)"/>
        </authorList>
    </citation>
    <scope>STRUCTURE BY NMR OF 315-394</scope>
</reference>